<sequence length="833" mass="92602">MAFRATPGRTPPGPGPRSGIPSASFPSPQPPMAGPGGIEEEDEEEPAEIHLCVLWSSGYLGIAYYDTSDSTIHFMPDAPDHESLKLLQRVLDEINPQSVVTSAKQDEAMTRFLGKLASEEHREPKGPEIILLPSVDFGPEISKQRLLSGNYSFISDSMTATEKILFLSSIIPFDCVLTVRALGGLLKFLSRRRIGVELEDYDVGVPILGFKKFVLTHLVSIDQDTYSVLQIFKSESHPSVYKVASGLKEGLSLFGILNRCRCKWGQKLLRLWFTRPTRELRELNSRLDVIQFFLMPQNLDMAQMLHRLLSHIKNVPLILKRMKLSHTKVSDWQVLYKTVYSALGLRDACRSLPQSIQLFQDIAQEFSDDLHHIASLIGKVVDFEESLAENRFTVLPNIDPDIDAKKRRLIGLPSFLTEVAQKELENLDSRIPSCSVIYIPLIGFLLSIPRLPFMVEASDFEIEGLDFMFLSEDKLHYRSARTKELDTLLGDLHCEIRDQETLLMYQLQCQVLARASVLTRVLDLASRLDVLLALASAARDYGYSRPHYSPCIHGVRIRNGRHPLMELCARTFVPNSTDCGGDQGRVKVITGPNSSGKSIYLKQVGLITFMALVGSFVPAEEAEIGVIDAIFTRIHSCESISLGLSTFMIDLNQVAKAVNNATEHSLVLIDEFGKGTNSVDGLALLAAVLRHWLALGPSCPHVFVATNFLSLVQLQLLPQGPLVQYLTMETCEDGEDLVFFYQLCQGVASASHASHTAAQAGLPDPLIARGKEVSDLIRSGKPIKATNELLRRNQMENCQALVDKFLKLDLEDPTLDLDIFISQEVLPAAPTIL</sequence>
<accession>Q9QUM7</accession>
<accession>Q9Z1Q6</accession>
<reference key="1">
    <citation type="journal article" date="1999" name="Mamm. Genome">
        <title>Identification and characterization of the mouse MutS homolog 5: Msh5.</title>
        <authorList>
            <person name="Her C."/>
            <person name="Wu X."/>
            <person name="Wan W."/>
            <person name="Doggett N.A."/>
        </authorList>
    </citation>
    <scope>NUCLEOTIDE SEQUENCE [MRNA]</scope>
    <source>
        <strain>BALB/cJ</strain>
        <tissue>Testis</tissue>
    </source>
</reference>
<reference key="2">
    <citation type="journal article" date="1999" name="Nat. Genet.">
        <title>Mammalian MutS homologue 5 is required for chromosome pairing in meiosis.</title>
        <authorList>
            <person name="Edelmann W."/>
            <person name="Cohen P.E."/>
            <person name="Kneitz B."/>
            <person name="Winand N."/>
            <person name="Lia M."/>
            <person name="Heyer J."/>
            <person name="Kolodner R."/>
            <person name="Pollard J.W."/>
            <person name="Kucherlapati R."/>
        </authorList>
    </citation>
    <scope>NUCLEOTIDE SEQUENCE [MRNA]</scope>
    <source>
        <strain>129/Ola</strain>
    </source>
</reference>
<reference key="3">
    <citation type="journal article" date="2001" name="Immunogenetics">
        <title>Genotype versus phenotype: conflicting results in mapping a lung tumor susceptibility locus to the G7c recombination interval in the mouse MHC class III region.</title>
        <authorList>
            <person name="van Kooij M."/>
            <person name="de Groot K."/>
            <person name="van Vugt H."/>
            <person name="Aten J."/>
            <person name="Snoek M."/>
        </authorList>
    </citation>
    <scope>NUCLEOTIDE SEQUENCE [GENOMIC DNA]</scope>
    <source>
        <strain>B10.A</strain>
    </source>
</reference>
<reference key="4">
    <citation type="journal article" date="2003" name="Genome Res.">
        <title>Analysis of the gene-dense major histocompatibility complex class III region and its comparison to mouse.</title>
        <authorList>
            <person name="Xie T."/>
            <person name="Rowen L."/>
            <person name="Aguado B."/>
            <person name="Ahearn M.E."/>
            <person name="Madan A."/>
            <person name="Qin S."/>
            <person name="Campbell R.D."/>
            <person name="Hood L."/>
        </authorList>
    </citation>
    <scope>NUCLEOTIDE SEQUENCE [LARGE SCALE GENOMIC DNA]</scope>
    <source>
        <strain>129</strain>
    </source>
</reference>
<reference key="5">
    <citation type="journal article" date="2017" name="Hum. Mol. Genet.">
        <title>Mutations in MSH5 in Primary Ovarian Insufficiency.</title>
        <authorList>
            <person name="Guo T."/>
            <person name="Zhao S."/>
            <person name="Zhao S."/>
            <person name="Chen M."/>
            <person name="Li G."/>
            <person name="Jiao X."/>
            <person name="Wang Z."/>
            <person name="Zhao Y."/>
            <person name="Qin Y."/>
            <person name="Gao F."/>
            <person name="Chen Z.J."/>
        </authorList>
    </citation>
    <scope>MUTAGENESIS OF ASP-486</scope>
</reference>
<reference key="6">
    <citation type="journal article" date="2023" name="Cell Discov.">
        <title>A novel recombination protein C12ORF40/REDIC1 is required for meiotic crossover formation.</title>
        <authorList>
            <person name="Fan S."/>
            <person name="Wang Y."/>
            <person name="Jiang H."/>
            <person name="Jiang X."/>
            <person name="Zhou J."/>
            <person name="Jiao Y."/>
            <person name="Ye J."/>
            <person name="Xu Z."/>
            <person name="Wang Y."/>
            <person name="Xie X."/>
            <person name="Zhang H."/>
            <person name="Li Y."/>
            <person name="Liu W."/>
            <person name="Zhang X."/>
            <person name="Ma H."/>
            <person name="Shi B."/>
            <person name="Zhang Y."/>
            <person name="Zubair M."/>
            <person name="Shah W."/>
            <person name="Xu Z."/>
            <person name="Xu B."/>
            <person name="Shi Q."/>
        </authorList>
    </citation>
    <scope>INTERACTION WITH REDIC1</scope>
</reference>
<feature type="chain" id="PRO_0000115203" description="MutS protein homolog 5">
    <location>
        <begin position="1"/>
        <end position="833"/>
    </location>
</feature>
<feature type="region of interest" description="Disordered" evidence="3">
    <location>
        <begin position="1"/>
        <end position="45"/>
    </location>
</feature>
<feature type="binding site" evidence="2">
    <location>
        <begin position="591"/>
        <end position="598"/>
    </location>
    <ligand>
        <name>ATP</name>
        <dbReference type="ChEBI" id="CHEBI:30616"/>
    </ligand>
</feature>
<feature type="mutagenesis site" description="Mice carrying this mutation show atrophic ovaries without oocytes, but no other visible phenotype." evidence="4">
    <original>D</original>
    <variation>Y</variation>
    <location>
        <position position="486"/>
    </location>
</feature>
<feature type="sequence conflict" description="In Ref. 3 and 4." evidence="6" ref="3 4">
    <original>K</original>
    <variation>T</variation>
    <location>
        <position position="804"/>
    </location>
</feature>
<name>MSH5_MOUSE</name>
<organism>
    <name type="scientific">Mus musculus</name>
    <name type="common">Mouse</name>
    <dbReference type="NCBI Taxonomy" id="10090"/>
    <lineage>
        <taxon>Eukaryota</taxon>
        <taxon>Metazoa</taxon>
        <taxon>Chordata</taxon>
        <taxon>Craniata</taxon>
        <taxon>Vertebrata</taxon>
        <taxon>Euteleostomi</taxon>
        <taxon>Mammalia</taxon>
        <taxon>Eutheria</taxon>
        <taxon>Euarchontoglires</taxon>
        <taxon>Glires</taxon>
        <taxon>Rodentia</taxon>
        <taxon>Myomorpha</taxon>
        <taxon>Muroidea</taxon>
        <taxon>Muridae</taxon>
        <taxon>Murinae</taxon>
        <taxon>Mus</taxon>
        <taxon>Mus</taxon>
    </lineage>
</organism>
<keyword id="KW-0067">ATP-binding</keyword>
<keyword id="KW-0227">DNA damage</keyword>
<keyword id="KW-0234">DNA repair</keyword>
<keyword id="KW-0238">DNA-binding</keyword>
<keyword id="KW-0469">Meiosis</keyword>
<keyword id="KW-0547">Nucleotide-binding</keyword>
<keyword id="KW-1185">Reference proteome</keyword>
<gene>
    <name type="primary">Msh5</name>
</gene>
<evidence type="ECO:0000250" key="1"/>
<evidence type="ECO:0000255" key="2"/>
<evidence type="ECO:0000256" key="3">
    <source>
        <dbReference type="SAM" id="MobiDB-lite"/>
    </source>
</evidence>
<evidence type="ECO:0000269" key="4">
    <source>
    </source>
</evidence>
<evidence type="ECO:0000269" key="5">
    <source>
    </source>
</evidence>
<evidence type="ECO:0000305" key="6"/>
<proteinExistence type="evidence at protein level"/>
<protein>
    <recommendedName>
        <fullName>MutS protein homolog 5</fullName>
    </recommendedName>
</protein>
<dbReference type="EMBL" id="AF146227">
    <property type="protein sequence ID" value="AAF07881.1"/>
    <property type="molecule type" value="mRNA"/>
</dbReference>
<dbReference type="EMBL" id="AF107352">
    <property type="protein sequence ID" value="AAD52102.1"/>
    <property type="molecule type" value="mRNA"/>
</dbReference>
<dbReference type="EMBL" id="AF109905">
    <property type="protein sequence ID" value="AAC84154.1"/>
    <property type="molecule type" value="Genomic_DNA"/>
</dbReference>
<dbReference type="EMBL" id="AF397035">
    <property type="protein sequence ID" value="AAL14454.1"/>
    <property type="molecule type" value="Genomic_DNA"/>
</dbReference>
<dbReference type="EMBL" id="AF397036">
    <property type="protein sequence ID" value="AAL14462.1"/>
    <property type="molecule type" value="Genomic_DNA"/>
</dbReference>
<dbReference type="CCDS" id="CCDS28674.1"/>
<dbReference type="RefSeq" id="NP_001139687.1">
    <property type="nucleotide sequence ID" value="NM_001146215.2"/>
</dbReference>
<dbReference type="RefSeq" id="NP_038628.2">
    <property type="nucleotide sequence ID" value="NM_013600.3"/>
</dbReference>
<dbReference type="SMR" id="Q9QUM7"/>
<dbReference type="BioGRID" id="201527">
    <property type="interactions" value="1"/>
</dbReference>
<dbReference type="FunCoup" id="Q9QUM7">
    <property type="interactions" value="1028"/>
</dbReference>
<dbReference type="IntAct" id="Q9QUM7">
    <property type="interactions" value="1"/>
</dbReference>
<dbReference type="MINT" id="Q9QUM7"/>
<dbReference type="STRING" id="10090.ENSMUSP00000007250"/>
<dbReference type="GlyGen" id="Q9QUM7">
    <property type="glycosylation" value="1 site"/>
</dbReference>
<dbReference type="iPTMnet" id="Q9QUM7"/>
<dbReference type="PhosphoSitePlus" id="Q9QUM7"/>
<dbReference type="PaxDb" id="10090-ENSMUSP00000007250"/>
<dbReference type="ProteomicsDB" id="295594"/>
<dbReference type="DNASU" id="17687"/>
<dbReference type="GeneID" id="17687"/>
<dbReference type="KEGG" id="mmu:17687"/>
<dbReference type="UCSC" id="uc008cfc.3">
    <property type="organism name" value="mouse"/>
</dbReference>
<dbReference type="AGR" id="MGI:1329021"/>
<dbReference type="CTD" id="4439"/>
<dbReference type="MGI" id="MGI:1329021">
    <property type="gene designation" value="Msh5"/>
</dbReference>
<dbReference type="eggNOG" id="KOG0221">
    <property type="taxonomic scope" value="Eukaryota"/>
</dbReference>
<dbReference type="InParanoid" id="Q9QUM7"/>
<dbReference type="OrthoDB" id="29596at2759"/>
<dbReference type="PhylomeDB" id="Q9QUM7"/>
<dbReference type="TreeFam" id="TF314549"/>
<dbReference type="BioGRID-ORCS" id="17687">
    <property type="hits" value="1 hit in 115 CRISPR screens"/>
</dbReference>
<dbReference type="ChiTaRS" id="Msh5">
    <property type="organism name" value="mouse"/>
</dbReference>
<dbReference type="PRO" id="PR:Q9QUM7"/>
<dbReference type="Proteomes" id="UP000000589">
    <property type="component" value="Unplaced"/>
</dbReference>
<dbReference type="RNAct" id="Q9QUM7">
    <property type="molecule type" value="protein"/>
</dbReference>
<dbReference type="GO" id="GO:0005654">
    <property type="term" value="C:nucleoplasm"/>
    <property type="evidence" value="ECO:0000304"/>
    <property type="project" value="Reactome"/>
</dbReference>
<dbReference type="GO" id="GO:0000795">
    <property type="term" value="C:synaptonemal complex"/>
    <property type="evidence" value="ECO:0000314"/>
    <property type="project" value="MGI"/>
</dbReference>
<dbReference type="GO" id="GO:0005524">
    <property type="term" value="F:ATP binding"/>
    <property type="evidence" value="ECO:0007669"/>
    <property type="project" value="UniProtKB-KW"/>
</dbReference>
<dbReference type="GO" id="GO:0140664">
    <property type="term" value="F:ATP-dependent DNA damage sensor activity"/>
    <property type="evidence" value="ECO:0007669"/>
    <property type="project" value="InterPro"/>
</dbReference>
<dbReference type="GO" id="GO:0030983">
    <property type="term" value="F:mismatched DNA binding"/>
    <property type="evidence" value="ECO:0007669"/>
    <property type="project" value="InterPro"/>
</dbReference>
<dbReference type="GO" id="GO:0007292">
    <property type="term" value="P:female gamete generation"/>
    <property type="evidence" value="ECO:0000315"/>
    <property type="project" value="MGI"/>
</dbReference>
<dbReference type="GO" id="GO:0007129">
    <property type="term" value="P:homologous chromosome pairing at meiosis"/>
    <property type="evidence" value="ECO:0000315"/>
    <property type="project" value="MGI"/>
</dbReference>
<dbReference type="GO" id="GO:0007127">
    <property type="term" value="P:meiosis I"/>
    <property type="evidence" value="ECO:0000315"/>
    <property type="project" value="MGI"/>
</dbReference>
<dbReference type="GO" id="GO:0006298">
    <property type="term" value="P:mismatch repair"/>
    <property type="evidence" value="ECO:0007669"/>
    <property type="project" value="InterPro"/>
</dbReference>
<dbReference type="CDD" id="cd03281">
    <property type="entry name" value="ABC_MSH5_euk"/>
    <property type="match status" value="1"/>
</dbReference>
<dbReference type="FunFam" id="1.10.1420.10:FF:000008">
    <property type="entry name" value="MutS homolog 5 (E. coli)"/>
    <property type="match status" value="1"/>
</dbReference>
<dbReference type="FunFam" id="3.40.50.300:FF:000820">
    <property type="entry name" value="MutS homolog 5 (E. coli)"/>
    <property type="match status" value="1"/>
</dbReference>
<dbReference type="Gene3D" id="1.10.1420.10">
    <property type="match status" value="1"/>
</dbReference>
<dbReference type="Gene3D" id="3.40.50.300">
    <property type="entry name" value="P-loop containing nucleotide triphosphate hydrolases"/>
    <property type="match status" value="1"/>
</dbReference>
<dbReference type="InterPro" id="IPR011184">
    <property type="entry name" value="DNA_mismatch_repair_Msh2"/>
</dbReference>
<dbReference type="InterPro" id="IPR000432">
    <property type="entry name" value="DNA_mismatch_repair_MutS_C"/>
</dbReference>
<dbReference type="InterPro" id="IPR007696">
    <property type="entry name" value="DNA_mismatch_repair_MutS_core"/>
</dbReference>
<dbReference type="InterPro" id="IPR036187">
    <property type="entry name" value="DNA_mismatch_repair_MutS_sf"/>
</dbReference>
<dbReference type="InterPro" id="IPR045076">
    <property type="entry name" value="MutS"/>
</dbReference>
<dbReference type="InterPro" id="IPR027417">
    <property type="entry name" value="P-loop_NTPase"/>
</dbReference>
<dbReference type="PANTHER" id="PTHR11361">
    <property type="entry name" value="DNA MISMATCH REPAIR PROTEIN MUTS FAMILY MEMBER"/>
    <property type="match status" value="1"/>
</dbReference>
<dbReference type="PANTHER" id="PTHR11361:SF20">
    <property type="entry name" value="MUTS PROTEIN HOMOLOG 5"/>
    <property type="match status" value="1"/>
</dbReference>
<dbReference type="Pfam" id="PF05192">
    <property type="entry name" value="MutS_III"/>
    <property type="match status" value="1"/>
</dbReference>
<dbReference type="Pfam" id="PF00488">
    <property type="entry name" value="MutS_V"/>
    <property type="match status" value="1"/>
</dbReference>
<dbReference type="PIRSF" id="PIRSF005813">
    <property type="entry name" value="MSH2"/>
    <property type="match status" value="1"/>
</dbReference>
<dbReference type="SMART" id="SM00534">
    <property type="entry name" value="MUTSac"/>
    <property type="match status" value="1"/>
</dbReference>
<dbReference type="SMART" id="SM00533">
    <property type="entry name" value="MUTSd"/>
    <property type="match status" value="1"/>
</dbReference>
<dbReference type="SUPFAM" id="SSF48334">
    <property type="entry name" value="DNA repair protein MutS, domain III"/>
    <property type="match status" value="1"/>
</dbReference>
<dbReference type="SUPFAM" id="SSF52540">
    <property type="entry name" value="P-loop containing nucleoside triphosphate hydrolases"/>
    <property type="match status" value="1"/>
</dbReference>
<dbReference type="PROSITE" id="PS00486">
    <property type="entry name" value="DNA_MISMATCH_REPAIR_2"/>
    <property type="match status" value="1"/>
</dbReference>
<comment type="function">
    <text evidence="1">Involved in DNA mismatch repair and meiotic recombination processes. Facilitates crossovers between homologs during meiosis (By similarity).</text>
</comment>
<comment type="subunit">
    <text evidence="1 5">Heterooligomer of MSH4 and MSH5. Interacts with HJURP (By similarity). Interacts with REDIC1.</text>
</comment>
<comment type="similarity">
    <text evidence="6">Belongs to the DNA mismatch repair MutS family.</text>
</comment>